<gene>
    <name type="primary">ACC2</name>
    <name type="ordered locus">At1g36180</name>
    <name type="ORF">F15C21.2</name>
</gene>
<accession>F4I1L3</accession>
<accession>Q9C8G0</accession>
<accession>Q9FR96</accession>
<feature type="chain" id="PRO_0000412212" description="Acetyl-CoA carboxylase 2">
    <location>
        <begin position="1"/>
        <end position="2355"/>
    </location>
</feature>
<feature type="domain" description="Biotin carboxylation">
    <location>
        <begin position="138"/>
        <end position="645"/>
    </location>
</feature>
<feature type="domain" description="ATP-grasp" evidence="4">
    <location>
        <begin position="291"/>
        <end position="485"/>
    </location>
</feature>
<feature type="domain" description="Biotinyl-binding" evidence="6">
    <location>
        <begin position="772"/>
        <end position="846"/>
    </location>
</feature>
<feature type="domain" description="CoA carboxyltransferase N-terminal" evidence="7">
    <location>
        <begin position="1593"/>
        <end position="1932"/>
    </location>
</feature>
<feature type="domain" description="CoA carboxyltransferase C-terminal" evidence="8">
    <location>
        <begin position="1936"/>
        <end position="2251"/>
    </location>
</feature>
<feature type="region of interest" description="Carboxyltransferase" evidence="9">
    <location>
        <begin position="1593"/>
        <end position="2251"/>
    </location>
</feature>
<feature type="active site" evidence="1">
    <location>
        <position position="458"/>
    </location>
</feature>
<feature type="binding site" evidence="4">
    <location>
        <begin position="317"/>
        <end position="374"/>
    </location>
    <ligand>
        <name>ATP</name>
        <dbReference type="ChEBI" id="CHEBI:30616"/>
    </ligand>
</feature>
<feature type="binding site" evidence="4 5">
    <location>
        <position position="440"/>
    </location>
    <ligand>
        <name>Mg(2+)</name>
        <dbReference type="ChEBI" id="CHEBI:18420"/>
        <label>1</label>
    </ligand>
</feature>
<feature type="binding site" evidence="4 5">
    <location>
        <position position="440"/>
    </location>
    <ligand>
        <name>Mn(2+)</name>
        <dbReference type="ChEBI" id="CHEBI:29035"/>
        <label>1</label>
    </ligand>
</feature>
<feature type="binding site" evidence="4 5">
    <location>
        <position position="454"/>
    </location>
    <ligand>
        <name>Mg(2+)</name>
        <dbReference type="ChEBI" id="CHEBI:18420"/>
        <label>1</label>
    </ligand>
</feature>
<feature type="binding site" evidence="4 5">
    <location>
        <position position="454"/>
    </location>
    <ligand>
        <name>Mg(2+)</name>
        <dbReference type="ChEBI" id="CHEBI:18420"/>
        <label>2</label>
    </ligand>
</feature>
<feature type="binding site" evidence="4 5">
    <location>
        <position position="454"/>
    </location>
    <ligand>
        <name>Mn(2+)</name>
        <dbReference type="ChEBI" id="CHEBI:29035"/>
        <label>1</label>
    </ligand>
</feature>
<feature type="binding site" evidence="4 5">
    <location>
        <position position="454"/>
    </location>
    <ligand>
        <name>Mn(2+)</name>
        <dbReference type="ChEBI" id="CHEBI:29035"/>
        <label>2</label>
    </ligand>
</feature>
<feature type="binding site" evidence="4 5">
    <location>
        <position position="456"/>
    </location>
    <ligand>
        <name>Mg(2+)</name>
        <dbReference type="ChEBI" id="CHEBI:18420"/>
        <label>2</label>
    </ligand>
</feature>
<feature type="binding site" evidence="4 5">
    <location>
        <position position="456"/>
    </location>
    <ligand>
        <name>Mn(2+)</name>
        <dbReference type="ChEBI" id="CHEBI:29035"/>
        <label>2</label>
    </ligand>
</feature>
<feature type="binding site" evidence="1">
    <location>
        <position position="1841"/>
    </location>
    <ligand>
        <name>CoA</name>
        <dbReference type="ChEBI" id="CHEBI:57287"/>
    </ligand>
</feature>
<feature type="binding site" evidence="1">
    <location>
        <position position="2142"/>
    </location>
    <ligand>
        <name>CoA</name>
        <dbReference type="ChEBI" id="CHEBI:57287"/>
    </ligand>
</feature>
<feature type="binding site" evidence="1">
    <location>
        <position position="2144"/>
    </location>
    <ligand>
        <name>CoA</name>
        <dbReference type="ChEBI" id="CHEBI:57287"/>
    </ligand>
</feature>
<feature type="modified residue" description="N6-biotinyllysine" evidence="6">
    <location>
        <position position="813"/>
    </location>
</feature>
<feature type="modified residue" description="Phosphothreonine" evidence="3">
    <location>
        <position position="1133"/>
    </location>
</feature>
<feature type="modified residue" description="Phosphoserine" evidence="3">
    <location>
        <position position="1293"/>
    </location>
</feature>
<feature type="sequence conflict" description="In Ref. 1; AAG40564." evidence="12" ref="1">
    <original>R</original>
    <variation>K</variation>
    <location>
        <position position="1855"/>
    </location>
</feature>
<comment type="function">
    <text evidence="3">Multifunctional enzyme that catalyzes the carboxylation of acetyl-CoA, forming malonyl-CoA, which is used in the plastid for fatty acid synthesis and in the cytosol in various biosynthetic pathways including fatty acid elongation.</text>
</comment>
<comment type="catalytic activity">
    <reaction evidence="2">
        <text>hydrogencarbonate + acetyl-CoA + ATP = malonyl-CoA + ADP + phosphate + H(+)</text>
        <dbReference type="Rhea" id="RHEA:11308"/>
        <dbReference type="ChEBI" id="CHEBI:15378"/>
        <dbReference type="ChEBI" id="CHEBI:17544"/>
        <dbReference type="ChEBI" id="CHEBI:30616"/>
        <dbReference type="ChEBI" id="CHEBI:43474"/>
        <dbReference type="ChEBI" id="CHEBI:57288"/>
        <dbReference type="ChEBI" id="CHEBI:57384"/>
        <dbReference type="ChEBI" id="CHEBI:456216"/>
        <dbReference type="EC" id="6.4.1.2"/>
    </reaction>
</comment>
<comment type="catalytic activity">
    <reaction evidence="2">
        <text>N(6)-biotinyl-L-lysyl-[protein] + hydrogencarbonate + ATP = N(6)-carboxybiotinyl-L-lysyl-[protein] + ADP + phosphate + H(+)</text>
        <dbReference type="Rhea" id="RHEA:13501"/>
        <dbReference type="Rhea" id="RHEA-COMP:10505"/>
        <dbReference type="Rhea" id="RHEA-COMP:10506"/>
        <dbReference type="ChEBI" id="CHEBI:15378"/>
        <dbReference type="ChEBI" id="CHEBI:17544"/>
        <dbReference type="ChEBI" id="CHEBI:30616"/>
        <dbReference type="ChEBI" id="CHEBI:43474"/>
        <dbReference type="ChEBI" id="CHEBI:83144"/>
        <dbReference type="ChEBI" id="CHEBI:83145"/>
        <dbReference type="ChEBI" id="CHEBI:456216"/>
        <dbReference type="EC" id="6.3.4.14"/>
    </reaction>
</comment>
<comment type="cofactor">
    <cofactor evidence="6">
        <name>biotin</name>
        <dbReference type="ChEBI" id="CHEBI:57586"/>
    </cofactor>
</comment>
<comment type="cofactor">
    <cofactor evidence="4 5">
        <name>Mg(2+)</name>
        <dbReference type="ChEBI" id="CHEBI:18420"/>
    </cofactor>
    <cofactor evidence="4 5">
        <name>Mn(2+)</name>
        <dbReference type="ChEBI" id="CHEBI:29035"/>
    </cofactor>
    <text evidence="4 5">Binds 2 magnesium or manganese ions per subunit.</text>
</comment>
<comment type="pathway">
    <text>Lipid metabolism; malonyl-CoA biosynthesis; malonyl-CoA from acetyl-CoA: step 1/1.</text>
</comment>
<comment type="subunit">
    <text evidence="12">Homodimer.</text>
</comment>
<comment type="subcellular location">
    <subcellularLocation>
        <location evidence="12">Cytoplasm</location>
        <location evidence="12">Cytosol</location>
    </subcellularLocation>
</comment>
<comment type="alternative products">
    <event type="alternative splicing"/>
    <isoform>
        <id>F4I1L3-1</id>
        <name>1</name>
        <sequence type="displayed"/>
    </isoform>
    <text>A number of isoforms are produced. According to EST sequences.</text>
</comment>
<comment type="tissue specificity">
    <text evidence="10 11">Widely expressed at low levels.</text>
</comment>
<comment type="sequence caution" evidence="12">
    <conflict type="erroneous gene model prediction">
        <sequence resource="EMBL-CDS" id="AAG40564"/>
    </conflict>
</comment>
<comment type="sequence caution" evidence="12">
    <conflict type="erroneous gene model prediction">
        <sequence resource="EMBL-CDS" id="AAG51252"/>
    </conflict>
</comment>
<dbReference type="EC" id="6.4.1.2"/>
<dbReference type="EC" id="6.3.4.14"/>
<dbReference type="EMBL" id="AF062308">
    <property type="protein sequence ID" value="AAG40564.1"/>
    <property type="status" value="ALT_SEQ"/>
    <property type="molecule type" value="Genomic_DNA"/>
</dbReference>
<dbReference type="EMBL" id="AC025781">
    <property type="protein sequence ID" value="AAG51252.1"/>
    <property type="status" value="ALT_SEQ"/>
    <property type="molecule type" value="Genomic_DNA"/>
</dbReference>
<dbReference type="EMBL" id="CP002684">
    <property type="protein sequence ID" value="AEE31851.1"/>
    <property type="molecule type" value="Genomic_DNA"/>
</dbReference>
<dbReference type="PIR" id="E86483">
    <property type="entry name" value="E86483"/>
</dbReference>
<dbReference type="RefSeq" id="NP_174850.4">
    <molecule id="F4I1L3-1"/>
    <property type="nucleotide sequence ID" value="NM_103314.5"/>
</dbReference>
<dbReference type="SMR" id="F4I1L3"/>
<dbReference type="BioGRID" id="25754">
    <property type="interactions" value="1"/>
</dbReference>
<dbReference type="FunCoup" id="F4I1L3">
    <property type="interactions" value="1946"/>
</dbReference>
<dbReference type="IntAct" id="F4I1L3">
    <property type="interactions" value="1"/>
</dbReference>
<dbReference type="STRING" id="3702.F4I1L3"/>
<dbReference type="iPTMnet" id="F4I1L3"/>
<dbReference type="PaxDb" id="3702-AT1G36180.1"/>
<dbReference type="ProteomicsDB" id="244567">
    <molecule id="F4I1L3-1"/>
</dbReference>
<dbReference type="EnsemblPlants" id="AT1G36180.1">
    <molecule id="F4I1L3-1"/>
    <property type="protein sequence ID" value="AT1G36180.1"/>
    <property type="gene ID" value="AT1G36180"/>
</dbReference>
<dbReference type="GeneID" id="840522"/>
<dbReference type="Gramene" id="AT1G36180.1">
    <molecule id="F4I1L3-1"/>
    <property type="protein sequence ID" value="AT1G36180.1"/>
    <property type="gene ID" value="AT1G36180"/>
</dbReference>
<dbReference type="KEGG" id="ath:AT1G36180"/>
<dbReference type="Araport" id="AT1G36180"/>
<dbReference type="TAIR" id="AT1G36180">
    <property type="gene designation" value="ACC2"/>
</dbReference>
<dbReference type="eggNOG" id="KOG0368">
    <property type="taxonomic scope" value="Eukaryota"/>
</dbReference>
<dbReference type="HOGENOM" id="CLU_000395_5_2_1"/>
<dbReference type="InParanoid" id="F4I1L3"/>
<dbReference type="OMA" id="KEWHMAS"/>
<dbReference type="UniPathway" id="UPA00655">
    <property type="reaction ID" value="UER00711"/>
</dbReference>
<dbReference type="PRO" id="PR:F4I1L3"/>
<dbReference type="Proteomes" id="UP000006548">
    <property type="component" value="Chromosome 1"/>
</dbReference>
<dbReference type="ExpressionAtlas" id="F4I1L3">
    <property type="expression patterns" value="baseline and differential"/>
</dbReference>
<dbReference type="GO" id="GO:0005829">
    <property type="term" value="C:cytosol"/>
    <property type="evidence" value="ECO:0007669"/>
    <property type="project" value="UniProtKB-SubCell"/>
</dbReference>
<dbReference type="GO" id="GO:0003989">
    <property type="term" value="F:acetyl-CoA carboxylase activity"/>
    <property type="evidence" value="ECO:0000315"/>
    <property type="project" value="TAIR"/>
</dbReference>
<dbReference type="GO" id="GO:0005524">
    <property type="term" value="F:ATP binding"/>
    <property type="evidence" value="ECO:0007669"/>
    <property type="project" value="UniProtKB-KW"/>
</dbReference>
<dbReference type="GO" id="GO:0004075">
    <property type="term" value="F:biotin carboxylase activity"/>
    <property type="evidence" value="ECO:0007669"/>
    <property type="project" value="UniProtKB-EC"/>
</dbReference>
<dbReference type="GO" id="GO:0046872">
    <property type="term" value="F:metal ion binding"/>
    <property type="evidence" value="ECO:0007669"/>
    <property type="project" value="UniProtKB-KW"/>
</dbReference>
<dbReference type="GO" id="GO:0006633">
    <property type="term" value="P:fatty acid biosynthetic process"/>
    <property type="evidence" value="ECO:0007669"/>
    <property type="project" value="UniProtKB-KW"/>
</dbReference>
<dbReference type="GO" id="GO:2001295">
    <property type="term" value="P:malonyl-CoA biosynthetic process"/>
    <property type="evidence" value="ECO:0007669"/>
    <property type="project" value="UniProtKB-UniPathway"/>
</dbReference>
<dbReference type="CDD" id="cd06850">
    <property type="entry name" value="biotinyl_domain"/>
    <property type="match status" value="1"/>
</dbReference>
<dbReference type="FunFam" id="2.40.50.100:FF:000005">
    <property type="entry name" value="Acetyl-CoA carboxylase 1"/>
    <property type="match status" value="1"/>
</dbReference>
<dbReference type="FunFam" id="3.30.470.20:FF:000043">
    <property type="entry name" value="acetyl-CoA carboxylase 1-like"/>
    <property type="match status" value="1"/>
</dbReference>
<dbReference type="FunFam" id="3.30.1490.20:FF:000003">
    <property type="entry name" value="acetyl-CoA carboxylase isoform X1"/>
    <property type="match status" value="1"/>
</dbReference>
<dbReference type="FunFam" id="3.40.50.20:FF:000005">
    <property type="entry name" value="acetyl-CoA carboxylase isoform X2"/>
    <property type="match status" value="1"/>
</dbReference>
<dbReference type="FunFam" id="3.90.226.10:FF:000010">
    <property type="entry name" value="acetyl-CoA carboxylase isoform X2"/>
    <property type="match status" value="1"/>
</dbReference>
<dbReference type="Gene3D" id="2.40.50.100">
    <property type="match status" value="1"/>
</dbReference>
<dbReference type="Gene3D" id="3.40.50.20">
    <property type="match status" value="1"/>
</dbReference>
<dbReference type="Gene3D" id="3.90.226.10">
    <property type="entry name" value="2-enoyl-CoA Hydratase, Chain A, domain 1"/>
    <property type="match status" value="2"/>
</dbReference>
<dbReference type="Gene3D" id="3.30.1490.20">
    <property type="entry name" value="ATP-grasp fold, A domain"/>
    <property type="match status" value="1"/>
</dbReference>
<dbReference type="Gene3D" id="3.30.470.20">
    <property type="entry name" value="ATP-grasp fold, B domain"/>
    <property type="match status" value="1"/>
</dbReference>
<dbReference type="Gene3D" id="2.40.460.10">
    <property type="entry name" value="Biotin dependent carboxylase carboxyltransferase"/>
    <property type="match status" value="1"/>
</dbReference>
<dbReference type="Gene3D" id="3.90.1770.10">
    <property type="entry name" value="PreATP-grasp domain"/>
    <property type="match status" value="1"/>
</dbReference>
<dbReference type="InterPro" id="IPR049076">
    <property type="entry name" value="ACCA"/>
</dbReference>
<dbReference type="InterPro" id="IPR049074">
    <property type="entry name" value="ACCA_BT"/>
</dbReference>
<dbReference type="InterPro" id="IPR034733">
    <property type="entry name" value="AcCoA_carboxyl_beta"/>
</dbReference>
<dbReference type="InterPro" id="IPR013537">
    <property type="entry name" value="AcCoA_COase_cen"/>
</dbReference>
<dbReference type="InterPro" id="IPR011761">
    <property type="entry name" value="ATP-grasp"/>
</dbReference>
<dbReference type="InterPro" id="IPR013815">
    <property type="entry name" value="ATP_grasp_subdomain_1"/>
</dbReference>
<dbReference type="InterPro" id="IPR005481">
    <property type="entry name" value="BC-like_N"/>
</dbReference>
<dbReference type="InterPro" id="IPR001882">
    <property type="entry name" value="Biotin_BS"/>
</dbReference>
<dbReference type="InterPro" id="IPR011764">
    <property type="entry name" value="Biotin_carboxylation_dom"/>
</dbReference>
<dbReference type="InterPro" id="IPR005482">
    <property type="entry name" value="Biotin_COase_C"/>
</dbReference>
<dbReference type="InterPro" id="IPR000089">
    <property type="entry name" value="Biotin_lipoyl"/>
</dbReference>
<dbReference type="InterPro" id="IPR005479">
    <property type="entry name" value="CbamoylP_synth_lsu-like_ATP-bd"/>
</dbReference>
<dbReference type="InterPro" id="IPR029045">
    <property type="entry name" value="ClpP/crotonase-like_dom_sf"/>
</dbReference>
<dbReference type="InterPro" id="IPR011763">
    <property type="entry name" value="COA_CT_C"/>
</dbReference>
<dbReference type="InterPro" id="IPR011762">
    <property type="entry name" value="COA_CT_N"/>
</dbReference>
<dbReference type="InterPro" id="IPR016185">
    <property type="entry name" value="PreATP-grasp_dom_sf"/>
</dbReference>
<dbReference type="InterPro" id="IPR011054">
    <property type="entry name" value="Rudment_hybrid_motif"/>
</dbReference>
<dbReference type="InterPro" id="IPR011053">
    <property type="entry name" value="Single_hybrid_motif"/>
</dbReference>
<dbReference type="PANTHER" id="PTHR45728:SF3">
    <property type="entry name" value="ACETYL-COA CARBOXYLASE"/>
    <property type="match status" value="1"/>
</dbReference>
<dbReference type="PANTHER" id="PTHR45728">
    <property type="entry name" value="ACETYL-COA CARBOXYLASE, ISOFORM A"/>
    <property type="match status" value="1"/>
</dbReference>
<dbReference type="Pfam" id="PF08326">
    <property type="entry name" value="ACC_central"/>
    <property type="match status" value="1"/>
</dbReference>
<dbReference type="Pfam" id="PF21385">
    <property type="entry name" value="ACCA_BT"/>
    <property type="match status" value="1"/>
</dbReference>
<dbReference type="Pfam" id="PF02785">
    <property type="entry name" value="Biotin_carb_C"/>
    <property type="match status" value="1"/>
</dbReference>
<dbReference type="Pfam" id="PF00289">
    <property type="entry name" value="Biotin_carb_N"/>
    <property type="match status" value="1"/>
</dbReference>
<dbReference type="Pfam" id="PF00364">
    <property type="entry name" value="Biotin_lipoyl"/>
    <property type="match status" value="1"/>
</dbReference>
<dbReference type="Pfam" id="PF01039">
    <property type="entry name" value="Carboxyl_trans"/>
    <property type="match status" value="1"/>
</dbReference>
<dbReference type="Pfam" id="PF02786">
    <property type="entry name" value="CPSase_L_D2"/>
    <property type="match status" value="1"/>
</dbReference>
<dbReference type="SMART" id="SM00878">
    <property type="entry name" value="Biotin_carb_C"/>
    <property type="match status" value="1"/>
</dbReference>
<dbReference type="SUPFAM" id="SSF52096">
    <property type="entry name" value="ClpP/crotonase"/>
    <property type="match status" value="2"/>
</dbReference>
<dbReference type="SUPFAM" id="SSF56059">
    <property type="entry name" value="Glutathione synthetase ATP-binding domain-like"/>
    <property type="match status" value="1"/>
</dbReference>
<dbReference type="SUPFAM" id="SSF52440">
    <property type="entry name" value="PreATP-grasp domain"/>
    <property type="match status" value="1"/>
</dbReference>
<dbReference type="SUPFAM" id="SSF51246">
    <property type="entry name" value="Rudiment single hybrid motif"/>
    <property type="match status" value="1"/>
</dbReference>
<dbReference type="SUPFAM" id="SSF51230">
    <property type="entry name" value="Single hybrid motif"/>
    <property type="match status" value="1"/>
</dbReference>
<dbReference type="PROSITE" id="PS50975">
    <property type="entry name" value="ATP_GRASP"/>
    <property type="match status" value="1"/>
</dbReference>
<dbReference type="PROSITE" id="PS50979">
    <property type="entry name" value="BC"/>
    <property type="match status" value="1"/>
</dbReference>
<dbReference type="PROSITE" id="PS00188">
    <property type="entry name" value="BIOTIN"/>
    <property type="match status" value="1"/>
</dbReference>
<dbReference type="PROSITE" id="PS50968">
    <property type="entry name" value="BIOTINYL_LIPOYL"/>
    <property type="match status" value="1"/>
</dbReference>
<dbReference type="PROSITE" id="PS50989">
    <property type="entry name" value="COA_CT_CTER"/>
    <property type="match status" value="1"/>
</dbReference>
<dbReference type="PROSITE" id="PS50980">
    <property type="entry name" value="COA_CT_NTER"/>
    <property type="match status" value="1"/>
</dbReference>
<dbReference type="PROSITE" id="PS00867">
    <property type="entry name" value="CPSASE_2"/>
    <property type="match status" value="1"/>
</dbReference>
<protein>
    <recommendedName>
        <fullName>Acetyl-CoA carboxylase 2</fullName>
        <ecNumber>6.4.1.2</ecNumber>
    </recommendedName>
    <domain>
        <recommendedName>
            <fullName>Biotin carboxylase</fullName>
            <ecNumber>6.3.4.14</ecNumber>
        </recommendedName>
    </domain>
</protein>
<name>ACC2_ARATH</name>
<sequence length="2355" mass="262729">MEMRALGSSCSTGNGGSAPITLTNISPWITTVFPSTVKLRSSLRTFKGVSSRVRTFKGVSSTRVLSRTKQQFPLFCFLNPDPISFLENDVSEAERTVVLPDGSVNGAGSVNGYHSDVVPGRNVAEVNEFCKALGGKRPIHSILVATNGMAAVKFIRSVRTWAYETFGSEKAVKLVAMATPEDMRINAEHIRIADQFVEVPGGTNNNNYANVQLIVEMAEVTRVDAVWPGWGHASENPELPDALKEKGIIFLGPPADSMIALGDKIGSSLIAQAADVPTLPWSGSHVKIPPGRSLVTVPEEIYKKACVYTTEEAIASCQVVGYPAMIKASWGGGGKGIRKVHNDDEVRALFKQVQGEVPGSPIFIMKVASQSRHLEAQLLCDQYGNVAALHSRDCSVQRRHQKIIEEGPITVAPQETIKKLEQAARRLAKSVNYVGAATVEYLYSMDTGEYYFLELNPRLQVEHPVTEWIAEVNLPAAQVAVGMGIPLWQIPEIRRFYGMEHGGGYDSWRKTSVVASPFDFDEAESLRPKGHCVAVRVTSEDPDDGFKPTSGEIQELSFKSKPNMWSYFSVKSGGGIHEFSDSQFGHVFAFGESRSVAIANMVLALKEIQIRGDIRTNVDYTIDLLHASDYRENKIHTGWLDSRIAMRVRAERPPWYLSVVGGALYKASTTSSAVVSDYVGYLEKGQIPPKHISLVHSQVSLNIEGSKYTIDVVRGGSGTYRLRMSNSEVVAEIHTLRDGGLLMQLDGKSHVIYAKEEATGTRLLIDGRTCLLQNDHDPSKLMAETPCKLLRYLVSDNSSIDTDTPYAEVEVMKMCMPLISPASGVIHFKLSEGQAMQAGELIAKLDLDDPSAVRKAKPFRGSFPRLGLPTAISGKVHQRCAATLNAARMILAGYDHKVDEVLQDLLNCLDSPELPFLQWQECFAVLATRLPKDLRNMLELKYKEFEIISKTSLTPDFPAKLLKGILEAHLSSCDEKERGSLERLIEPLMSLVKSYEGGRESHARLIVHSLFEEYLSVEELFNDNMLADVIERMRQQYKKDRLKIVDIVLSHQGIIHKNKLVLRLMEQLVYPNPAAYREKLIRFSALNHTNYSQLALKASQLLEQTKRSELRSNIARSLSELEMFTEAGENMDTPKRKSAISETMENLVSSSLAVEDALVGLFDHSDHTLQRRVVETYIHRLYQPYVVKESVRMQWHQSGVIASWEFLEHFERKNTGPDDHEISEKGIVAKSSKRKRGTMVIIKSLQFLPSIINASLRETNHSHCEYARAPLSGNMMHIAVVGINNQMSLLQDSGDEDQTQERVNKLAKILKEEEVSLTLCSAGVGVISCIIQRDEGRTPMRHSFHWLMEKQYYVEEPLLRHVEPPLSVYLELDKLKGYSNIQYSPSRDRQWHMYSVTDRPVPIKRMFLRSLVRQTTMNDGFLLQQGQDYQLSQTVLSMAFTSKCILRSLMNAMEELELNAHNAAMKPDHAHMFLCILREQQIDDLVPYPRRFEVNAEDEETTVETILEEATQEIHRSVGVRMHALGVCEWEVRLWLVSSGLANGAWRVVVANVTGRTCTVHIYREVEATGRNSLIYHSITKKGPLHGTLINGQYKPLNNLDRKRLAARRSNTTYCYDFPLAFETALELNWASQHSGVRKPCKNRLINVKELVFSNTEGSLGTSLIPVERPAGLNDIGMVAWILEMSTPEFPMGRKLLIVANDVTFKAGSFGPREDAFFLAVTELACTKKLPLIYLAANSGARLGVAEEVKACFKVGWSDEVSPGNDFQYIYLSSEDYARIGSSVIAHEVKLPSGETRWVIDTIVGKEDGLGVENLTGSGAIAGAYSRAYNETFTLTFVSGRSVGIGAYLARLGMRCIQRLDQPIILTGFSTLNKLLGREVYSSHMQLGGPKIMGTNGVVHLTVSDDLEGVSAILNWLSYIPAYVGGPLPVLAPLDPPERTVEYIPENSCDPRAAIAGINDNTGKWLGGIFDKNSFVETLEGWARTVVTGRAKLGGIPIGVVAVETQTVMHVIPADPGQLDSHERVVPQAGQVWFPDSAAKTAQALMDFNREQLPLFIIANWRGFSGGQRDLFEGILQAGSAIVENLRTYRQPVFVYIPMMGELRGGAWVVVDSQINSDYIEMYADETARGNVLEPEGMIEIKFRRKELLECMGRLDQTLINLKANIQDAKRNKAYANIELLQKQIKTREKQLLPVYTQIATKFAELHDTSMRMAAKGVIKSVVEWSGSRSFFYKKLYRRIAESSLVRNIRKASGDILSYKSAMGLIQDWFRKSEIAKGKEEAWTDDQLFFTWKDNVSNYEQKLSELRTQKLLNQLAEIGNSSDLQALPQGLANLLNKVDLSRREELVDAIRKVLG</sequence>
<keyword id="KW-0021">Allosteric enzyme</keyword>
<keyword id="KW-0025">Alternative splicing</keyword>
<keyword id="KW-0067">ATP-binding</keyword>
<keyword id="KW-0092">Biotin</keyword>
<keyword id="KW-0963">Cytoplasm</keyword>
<keyword id="KW-0275">Fatty acid biosynthesis</keyword>
<keyword id="KW-0276">Fatty acid metabolism</keyword>
<keyword id="KW-0436">Ligase</keyword>
<keyword id="KW-0444">Lipid biosynthesis</keyword>
<keyword id="KW-0443">Lipid metabolism</keyword>
<keyword id="KW-0460">Magnesium</keyword>
<keyword id="KW-0464">Manganese</keyword>
<keyword id="KW-0479">Metal-binding</keyword>
<keyword id="KW-0511">Multifunctional enzyme</keyword>
<keyword id="KW-0547">Nucleotide-binding</keyword>
<keyword id="KW-0597">Phosphoprotein</keyword>
<keyword id="KW-1185">Reference proteome</keyword>
<reference key="1">
    <citation type="journal article" date="1995" name="Plant Cell Physiol.">
        <title>Genomic organization of 251 kDa acetyl-CoA carboxylase genes in Arabidopsis: tandem gene duplication has made two differentially expressed isozymes.</title>
        <authorList>
            <person name="Yanai Y."/>
            <person name="Kawasaki T."/>
            <person name="Shimada H."/>
            <person name="Wurtele E.S."/>
            <person name="Nikolau B.J."/>
            <person name="Ichikawa N."/>
        </authorList>
    </citation>
    <scope>NUCLEOTIDE SEQUENCE [GENOMIC DNA]</scope>
    <scope>TISSUE SPECIFICITY</scope>
    <source>
        <strain>cv. Columbia</strain>
    </source>
</reference>
<reference key="2">
    <citation type="journal article" date="2000" name="Nature">
        <title>Sequence and analysis of chromosome 1 of the plant Arabidopsis thaliana.</title>
        <authorList>
            <person name="Theologis A."/>
            <person name="Ecker J.R."/>
            <person name="Palm C.J."/>
            <person name="Federspiel N.A."/>
            <person name="Kaul S."/>
            <person name="White O."/>
            <person name="Alonso J."/>
            <person name="Altafi H."/>
            <person name="Araujo R."/>
            <person name="Bowman C.L."/>
            <person name="Brooks S.Y."/>
            <person name="Buehler E."/>
            <person name="Chan A."/>
            <person name="Chao Q."/>
            <person name="Chen H."/>
            <person name="Cheuk R.F."/>
            <person name="Chin C.W."/>
            <person name="Chung M.K."/>
            <person name="Conn L."/>
            <person name="Conway A.B."/>
            <person name="Conway A.R."/>
            <person name="Creasy T.H."/>
            <person name="Dewar K."/>
            <person name="Dunn P."/>
            <person name="Etgu P."/>
            <person name="Feldblyum T.V."/>
            <person name="Feng J.-D."/>
            <person name="Fong B."/>
            <person name="Fujii C.Y."/>
            <person name="Gill J.E."/>
            <person name="Goldsmith A.D."/>
            <person name="Haas B."/>
            <person name="Hansen N.F."/>
            <person name="Hughes B."/>
            <person name="Huizar L."/>
            <person name="Hunter J.L."/>
            <person name="Jenkins J."/>
            <person name="Johnson-Hopson C."/>
            <person name="Khan S."/>
            <person name="Khaykin E."/>
            <person name="Kim C.J."/>
            <person name="Koo H.L."/>
            <person name="Kremenetskaia I."/>
            <person name="Kurtz D.B."/>
            <person name="Kwan A."/>
            <person name="Lam B."/>
            <person name="Langin-Hooper S."/>
            <person name="Lee A."/>
            <person name="Lee J.M."/>
            <person name="Lenz C.A."/>
            <person name="Li J.H."/>
            <person name="Li Y.-P."/>
            <person name="Lin X."/>
            <person name="Liu S.X."/>
            <person name="Liu Z.A."/>
            <person name="Luros J.S."/>
            <person name="Maiti R."/>
            <person name="Marziali A."/>
            <person name="Militscher J."/>
            <person name="Miranda M."/>
            <person name="Nguyen M."/>
            <person name="Nierman W.C."/>
            <person name="Osborne B.I."/>
            <person name="Pai G."/>
            <person name="Peterson J."/>
            <person name="Pham P.K."/>
            <person name="Rizzo M."/>
            <person name="Rooney T."/>
            <person name="Rowley D."/>
            <person name="Sakano H."/>
            <person name="Salzberg S.L."/>
            <person name="Schwartz J.R."/>
            <person name="Shinn P."/>
            <person name="Southwick A.M."/>
            <person name="Sun H."/>
            <person name="Tallon L.J."/>
            <person name="Tambunga G."/>
            <person name="Toriumi M.J."/>
            <person name="Town C.D."/>
            <person name="Utterback T."/>
            <person name="Van Aken S."/>
            <person name="Vaysberg M."/>
            <person name="Vysotskaia V.S."/>
            <person name="Walker M."/>
            <person name="Wu D."/>
            <person name="Yu G."/>
            <person name="Fraser C.M."/>
            <person name="Venter J.C."/>
            <person name="Davis R.W."/>
        </authorList>
    </citation>
    <scope>NUCLEOTIDE SEQUENCE [LARGE SCALE GENOMIC DNA]</scope>
    <source>
        <strain>cv. Columbia</strain>
    </source>
</reference>
<reference key="3">
    <citation type="journal article" date="2017" name="Plant J.">
        <title>Araport11: a complete reannotation of the Arabidopsis thaliana reference genome.</title>
        <authorList>
            <person name="Cheng C.Y."/>
            <person name="Krishnakumar V."/>
            <person name="Chan A.P."/>
            <person name="Thibaud-Nissen F."/>
            <person name="Schobel S."/>
            <person name="Town C.D."/>
        </authorList>
    </citation>
    <scope>GENOME REANNOTATION</scope>
    <source>
        <strain>cv. Columbia</strain>
    </source>
</reference>
<reference key="4">
    <citation type="journal article" date="2003" name="Plant J.">
        <title>Multifunctional acetyl-CoA carboxylase 1 is essential for very long chain fatty acid elongation and embryo development in Arabidopsis.</title>
        <authorList>
            <person name="Baud S."/>
            <person name="Guyon V."/>
            <person name="Kronenberger J."/>
            <person name="Wuilleme S."/>
            <person name="Miquel M."/>
            <person name="Caboche M."/>
            <person name="Lepiniec L."/>
            <person name="Rochat C."/>
        </authorList>
    </citation>
    <scope>TISSUE SPECIFICITY</scope>
    <source>
        <strain>cv. Wassilewskija</strain>
    </source>
</reference>
<evidence type="ECO:0000250" key="1"/>
<evidence type="ECO:0000250" key="2">
    <source>
        <dbReference type="UniProtKB" id="O04983"/>
    </source>
</evidence>
<evidence type="ECO:0000250" key="3">
    <source>
        <dbReference type="UniProtKB" id="Q38970"/>
    </source>
</evidence>
<evidence type="ECO:0000255" key="4">
    <source>
        <dbReference type="PROSITE-ProRule" id="PRU00409"/>
    </source>
</evidence>
<evidence type="ECO:0000255" key="5">
    <source>
        <dbReference type="PROSITE-ProRule" id="PRU00969"/>
    </source>
</evidence>
<evidence type="ECO:0000255" key="6">
    <source>
        <dbReference type="PROSITE-ProRule" id="PRU01066"/>
    </source>
</evidence>
<evidence type="ECO:0000255" key="7">
    <source>
        <dbReference type="PROSITE-ProRule" id="PRU01136"/>
    </source>
</evidence>
<evidence type="ECO:0000255" key="8">
    <source>
        <dbReference type="PROSITE-ProRule" id="PRU01137"/>
    </source>
</evidence>
<evidence type="ECO:0000255" key="9">
    <source>
        <dbReference type="PROSITE-ProRule" id="PRU01138"/>
    </source>
</evidence>
<evidence type="ECO:0000269" key="10">
    <source>
    </source>
</evidence>
<evidence type="ECO:0000269" key="11">
    <source>
    </source>
</evidence>
<evidence type="ECO:0000305" key="12"/>
<proteinExistence type="evidence at transcript level"/>
<organism>
    <name type="scientific">Arabidopsis thaliana</name>
    <name type="common">Mouse-ear cress</name>
    <dbReference type="NCBI Taxonomy" id="3702"/>
    <lineage>
        <taxon>Eukaryota</taxon>
        <taxon>Viridiplantae</taxon>
        <taxon>Streptophyta</taxon>
        <taxon>Embryophyta</taxon>
        <taxon>Tracheophyta</taxon>
        <taxon>Spermatophyta</taxon>
        <taxon>Magnoliopsida</taxon>
        <taxon>eudicotyledons</taxon>
        <taxon>Gunneridae</taxon>
        <taxon>Pentapetalae</taxon>
        <taxon>rosids</taxon>
        <taxon>malvids</taxon>
        <taxon>Brassicales</taxon>
        <taxon>Brassicaceae</taxon>
        <taxon>Camelineae</taxon>
        <taxon>Arabidopsis</taxon>
    </lineage>
</organism>